<feature type="transit peptide" description="Chloroplast" evidence="2">
    <location>
        <begin position="1"/>
        <end position="52"/>
    </location>
</feature>
<feature type="chain" id="PRO_0000368027" description="RNA pseudouridine synthase 6, chloroplastic">
    <location>
        <begin position="53"/>
        <end position="477"/>
    </location>
</feature>
<feature type="domain" description="S4 RNA-binding">
    <location>
        <begin position="98"/>
        <end position="205"/>
    </location>
</feature>
<feature type="active site" evidence="1">
    <location>
        <position position="258"/>
    </location>
</feature>
<feature type="splice variant" id="VSP_036778" description="In isoform 2." evidence="3">
    <original>PKAAASLASLLPQLWHRPVQPPPFLHRALSSSSPLLRRHRAALHSPAAPLSAAAVSTSAATVEAPATAAYPVYGRLLPCPLQDDPPRIEHLVAREDEVAVDFISRSLTLPPLYVAD</original>
    <variation>AGSCLALCKMTLQGSSTSSRGKTRSPSISSPGHSPSLHY</variation>
    <location>
        <begin position="2"/>
        <end position="117"/>
    </location>
</feature>
<feature type="sequence conflict" description="In Ref. 5; AK065105." evidence="4" ref="5">
    <original>G</original>
    <variation>R</variation>
    <location>
        <position position="279"/>
    </location>
</feature>
<evidence type="ECO:0000250" key="1"/>
<evidence type="ECO:0000255" key="2"/>
<evidence type="ECO:0000303" key="3">
    <source>
    </source>
</evidence>
<evidence type="ECO:0000305" key="4"/>
<name>PUS6_ORYSJ</name>
<comment type="catalytic activity">
    <reaction>
        <text>a uridine in RNA = a pseudouridine in RNA</text>
        <dbReference type="Rhea" id="RHEA:48348"/>
        <dbReference type="Rhea" id="RHEA-COMP:12068"/>
        <dbReference type="Rhea" id="RHEA-COMP:12069"/>
        <dbReference type="ChEBI" id="CHEBI:65314"/>
        <dbReference type="ChEBI" id="CHEBI:65315"/>
    </reaction>
</comment>
<comment type="subcellular location">
    <subcellularLocation>
        <location evidence="4">Plastid</location>
        <location evidence="4">Chloroplast</location>
    </subcellularLocation>
</comment>
<comment type="alternative products">
    <event type="alternative splicing"/>
    <isoform>
        <id>A3BN26-1</id>
        <name>1</name>
        <sequence type="displayed"/>
    </isoform>
    <isoform>
        <id>A3BN26-2</id>
        <name>2</name>
        <sequence type="described" ref="VSP_036778"/>
    </isoform>
</comment>
<comment type="miscellaneous">
    <molecule>Isoform 2</molecule>
    <text evidence="4">May be due to a competing acceptor splice site.</text>
</comment>
<comment type="similarity">
    <text evidence="4">Belongs to the pseudouridine synthase RluA family.</text>
</comment>
<keyword id="KW-0025">Alternative splicing</keyword>
<keyword id="KW-0150">Chloroplast</keyword>
<keyword id="KW-0413">Isomerase</keyword>
<keyword id="KW-0934">Plastid</keyword>
<keyword id="KW-1185">Reference proteome</keyword>
<keyword id="KW-0694">RNA-binding</keyword>
<keyword id="KW-0809">Transit peptide</keyword>
<proteinExistence type="evidence at transcript level"/>
<protein>
    <recommendedName>
        <fullName>RNA pseudouridine synthase 6, chloroplastic</fullName>
        <ecNumber>5.4.99.-</ecNumber>
    </recommendedName>
    <alternativeName>
        <fullName>RNA pseudouridylate synthase 6</fullName>
    </alternativeName>
    <alternativeName>
        <fullName>RNA-uridine isomerase 6</fullName>
    </alternativeName>
</protein>
<dbReference type="EC" id="5.4.99.-"/>
<dbReference type="EMBL" id="AP004378">
    <property type="protein sequence ID" value="BAC83571.1"/>
    <property type="molecule type" value="Genomic_DNA"/>
</dbReference>
<dbReference type="EMBL" id="AP008213">
    <property type="protein sequence ID" value="BAF22445.1"/>
    <property type="molecule type" value="Genomic_DNA"/>
</dbReference>
<dbReference type="EMBL" id="AP014963">
    <property type="status" value="NOT_ANNOTATED_CDS"/>
    <property type="molecule type" value="Genomic_DNA"/>
</dbReference>
<dbReference type="EMBL" id="CM000144">
    <property type="protein sequence ID" value="EAZ40965.1"/>
    <property type="molecule type" value="Genomic_DNA"/>
</dbReference>
<dbReference type="EMBL" id="AK065105">
    <property type="status" value="NOT_ANNOTATED_CDS"/>
    <property type="molecule type" value="mRNA"/>
</dbReference>
<dbReference type="RefSeq" id="XP_015647803.1">
    <property type="nucleotide sequence ID" value="XM_015792317.1"/>
</dbReference>
<dbReference type="FunCoup" id="A3BN26">
    <property type="interactions" value="760"/>
</dbReference>
<dbReference type="STRING" id="39947.A3BN26"/>
<dbReference type="PaxDb" id="39947-A3BN26"/>
<dbReference type="KEGG" id="dosa:Os07g0660400"/>
<dbReference type="eggNOG" id="KOG1919">
    <property type="taxonomic scope" value="Eukaryota"/>
</dbReference>
<dbReference type="InParanoid" id="A3BN26"/>
<dbReference type="Proteomes" id="UP000000763">
    <property type="component" value="Chromosome 7"/>
</dbReference>
<dbReference type="Proteomes" id="UP000007752">
    <property type="component" value="Chromosome 7"/>
</dbReference>
<dbReference type="Proteomes" id="UP000059680">
    <property type="component" value="Chromosome 7"/>
</dbReference>
<dbReference type="GO" id="GO:0009507">
    <property type="term" value="C:chloroplast"/>
    <property type="evidence" value="ECO:0007669"/>
    <property type="project" value="UniProtKB-SubCell"/>
</dbReference>
<dbReference type="GO" id="GO:0009982">
    <property type="term" value="F:pseudouridine synthase activity"/>
    <property type="evidence" value="ECO:0000318"/>
    <property type="project" value="GO_Central"/>
</dbReference>
<dbReference type="GO" id="GO:0003723">
    <property type="term" value="F:RNA binding"/>
    <property type="evidence" value="ECO:0007669"/>
    <property type="project" value="UniProtKB-KW"/>
</dbReference>
<dbReference type="GO" id="GO:0000455">
    <property type="term" value="P:enzyme-directed rRNA pseudouridine synthesis"/>
    <property type="evidence" value="ECO:0000318"/>
    <property type="project" value="GO_Central"/>
</dbReference>
<dbReference type="CDD" id="cd02869">
    <property type="entry name" value="PseudoU_synth_RluA_like"/>
    <property type="match status" value="1"/>
</dbReference>
<dbReference type="Gene3D" id="3.30.2350.10">
    <property type="entry name" value="Pseudouridine synthase"/>
    <property type="match status" value="1"/>
</dbReference>
<dbReference type="InterPro" id="IPR020103">
    <property type="entry name" value="PsdUridine_synth_cat_dom_sf"/>
</dbReference>
<dbReference type="InterPro" id="IPR006145">
    <property type="entry name" value="PsdUridine_synth_RsuA/RluA"/>
</dbReference>
<dbReference type="InterPro" id="IPR050188">
    <property type="entry name" value="RluA_PseudoU_synthase"/>
</dbReference>
<dbReference type="PANTHER" id="PTHR21600">
    <property type="entry name" value="MITOCHONDRIAL RNA PSEUDOURIDINE SYNTHASE"/>
    <property type="match status" value="1"/>
</dbReference>
<dbReference type="PANTHER" id="PTHR21600:SF52">
    <property type="entry name" value="PSEUDOURIDINE SYNTHASE RSUA_RLUA-LIKE DOMAIN-CONTAINING PROTEIN"/>
    <property type="match status" value="1"/>
</dbReference>
<dbReference type="Pfam" id="PF00849">
    <property type="entry name" value="PseudoU_synth_2"/>
    <property type="match status" value="1"/>
</dbReference>
<dbReference type="SUPFAM" id="SSF55120">
    <property type="entry name" value="Pseudouridine synthase"/>
    <property type="match status" value="1"/>
</dbReference>
<reference key="1">
    <citation type="journal article" date="2005" name="Nature">
        <title>The map-based sequence of the rice genome.</title>
        <authorList>
            <consortium name="International rice genome sequencing project (IRGSP)"/>
        </authorList>
    </citation>
    <scope>NUCLEOTIDE SEQUENCE [LARGE SCALE GENOMIC DNA]</scope>
    <source>
        <strain>cv. Nipponbare</strain>
    </source>
</reference>
<reference key="2">
    <citation type="journal article" date="2008" name="Nucleic Acids Res.">
        <title>The rice annotation project database (RAP-DB): 2008 update.</title>
        <authorList>
            <consortium name="The rice annotation project (RAP)"/>
        </authorList>
    </citation>
    <scope>GENOME REANNOTATION</scope>
    <source>
        <strain>cv. Nipponbare</strain>
    </source>
</reference>
<reference key="3">
    <citation type="journal article" date="2013" name="Rice">
        <title>Improvement of the Oryza sativa Nipponbare reference genome using next generation sequence and optical map data.</title>
        <authorList>
            <person name="Kawahara Y."/>
            <person name="de la Bastide M."/>
            <person name="Hamilton J.P."/>
            <person name="Kanamori H."/>
            <person name="McCombie W.R."/>
            <person name="Ouyang S."/>
            <person name="Schwartz D.C."/>
            <person name="Tanaka T."/>
            <person name="Wu J."/>
            <person name="Zhou S."/>
            <person name="Childs K.L."/>
            <person name="Davidson R.M."/>
            <person name="Lin H."/>
            <person name="Quesada-Ocampo L."/>
            <person name="Vaillancourt B."/>
            <person name="Sakai H."/>
            <person name="Lee S.S."/>
            <person name="Kim J."/>
            <person name="Numa H."/>
            <person name="Itoh T."/>
            <person name="Buell C.R."/>
            <person name="Matsumoto T."/>
        </authorList>
    </citation>
    <scope>GENOME REANNOTATION</scope>
    <source>
        <strain>cv. Nipponbare</strain>
    </source>
</reference>
<reference key="4">
    <citation type="journal article" date="2005" name="PLoS Biol.">
        <title>The genomes of Oryza sativa: a history of duplications.</title>
        <authorList>
            <person name="Yu J."/>
            <person name="Wang J."/>
            <person name="Lin W."/>
            <person name="Li S."/>
            <person name="Li H."/>
            <person name="Zhou J."/>
            <person name="Ni P."/>
            <person name="Dong W."/>
            <person name="Hu S."/>
            <person name="Zeng C."/>
            <person name="Zhang J."/>
            <person name="Zhang Y."/>
            <person name="Li R."/>
            <person name="Xu Z."/>
            <person name="Li S."/>
            <person name="Li X."/>
            <person name="Zheng H."/>
            <person name="Cong L."/>
            <person name="Lin L."/>
            <person name="Yin J."/>
            <person name="Geng J."/>
            <person name="Li G."/>
            <person name="Shi J."/>
            <person name="Liu J."/>
            <person name="Lv H."/>
            <person name="Li J."/>
            <person name="Wang J."/>
            <person name="Deng Y."/>
            <person name="Ran L."/>
            <person name="Shi X."/>
            <person name="Wang X."/>
            <person name="Wu Q."/>
            <person name="Li C."/>
            <person name="Ren X."/>
            <person name="Wang J."/>
            <person name="Wang X."/>
            <person name="Li D."/>
            <person name="Liu D."/>
            <person name="Zhang X."/>
            <person name="Ji Z."/>
            <person name="Zhao W."/>
            <person name="Sun Y."/>
            <person name="Zhang Z."/>
            <person name="Bao J."/>
            <person name="Han Y."/>
            <person name="Dong L."/>
            <person name="Ji J."/>
            <person name="Chen P."/>
            <person name="Wu S."/>
            <person name="Liu J."/>
            <person name="Xiao Y."/>
            <person name="Bu D."/>
            <person name="Tan J."/>
            <person name="Yang L."/>
            <person name="Ye C."/>
            <person name="Zhang J."/>
            <person name="Xu J."/>
            <person name="Zhou Y."/>
            <person name="Yu Y."/>
            <person name="Zhang B."/>
            <person name="Zhuang S."/>
            <person name="Wei H."/>
            <person name="Liu B."/>
            <person name="Lei M."/>
            <person name="Yu H."/>
            <person name="Li Y."/>
            <person name="Xu H."/>
            <person name="Wei S."/>
            <person name="He X."/>
            <person name="Fang L."/>
            <person name="Zhang Z."/>
            <person name="Zhang Y."/>
            <person name="Huang X."/>
            <person name="Su Z."/>
            <person name="Tong W."/>
            <person name="Li J."/>
            <person name="Tong Z."/>
            <person name="Li S."/>
            <person name="Ye J."/>
            <person name="Wang L."/>
            <person name="Fang L."/>
            <person name="Lei T."/>
            <person name="Chen C.-S."/>
            <person name="Chen H.-C."/>
            <person name="Xu Z."/>
            <person name="Li H."/>
            <person name="Huang H."/>
            <person name="Zhang F."/>
            <person name="Xu H."/>
            <person name="Li N."/>
            <person name="Zhao C."/>
            <person name="Li S."/>
            <person name="Dong L."/>
            <person name="Huang Y."/>
            <person name="Li L."/>
            <person name="Xi Y."/>
            <person name="Qi Q."/>
            <person name="Li W."/>
            <person name="Zhang B."/>
            <person name="Hu W."/>
            <person name="Zhang Y."/>
            <person name="Tian X."/>
            <person name="Jiao Y."/>
            <person name="Liang X."/>
            <person name="Jin J."/>
            <person name="Gao L."/>
            <person name="Zheng W."/>
            <person name="Hao B."/>
            <person name="Liu S.-M."/>
            <person name="Wang W."/>
            <person name="Yuan L."/>
            <person name="Cao M."/>
            <person name="McDermott J."/>
            <person name="Samudrala R."/>
            <person name="Wang J."/>
            <person name="Wong G.K.-S."/>
            <person name="Yang H."/>
        </authorList>
    </citation>
    <scope>NUCLEOTIDE SEQUENCE [LARGE SCALE GENOMIC DNA]</scope>
    <source>
        <strain>cv. Nipponbare</strain>
    </source>
</reference>
<reference key="5">
    <citation type="journal article" date="2003" name="Science">
        <title>Collection, mapping, and annotation of over 28,000 cDNA clones from japonica rice.</title>
        <authorList>
            <consortium name="The rice full-length cDNA consortium"/>
        </authorList>
    </citation>
    <scope>NUCLEOTIDE SEQUENCE [LARGE SCALE MRNA] (ISOFORM 2)</scope>
    <source>
        <strain>cv. Nipponbare</strain>
    </source>
</reference>
<accession>A3BN26</accession>
<accession>Q7EZZ2</accession>
<gene>
    <name type="ordered locus">Os07g0660400</name>
    <name type="ordered locus">LOC_Os07g46600</name>
    <name type="ORF">OsJ_024448</name>
    <name type="ORF">P0496C02.118</name>
</gene>
<organism>
    <name type="scientific">Oryza sativa subsp. japonica</name>
    <name type="common">Rice</name>
    <dbReference type="NCBI Taxonomy" id="39947"/>
    <lineage>
        <taxon>Eukaryota</taxon>
        <taxon>Viridiplantae</taxon>
        <taxon>Streptophyta</taxon>
        <taxon>Embryophyta</taxon>
        <taxon>Tracheophyta</taxon>
        <taxon>Spermatophyta</taxon>
        <taxon>Magnoliopsida</taxon>
        <taxon>Liliopsida</taxon>
        <taxon>Poales</taxon>
        <taxon>Poaceae</taxon>
        <taxon>BOP clade</taxon>
        <taxon>Oryzoideae</taxon>
        <taxon>Oryzeae</taxon>
        <taxon>Oryzinae</taxon>
        <taxon>Oryza</taxon>
        <taxon>Oryza sativa</taxon>
    </lineage>
</organism>
<sequence length="477" mass="52881">MPKAAASLASLLPQLWHRPVQPPPFLHRALSSSSPLLRRHRAALHSPAAPLSAAAVSTSAATVEAPATAAYPVYGRLLPCPLQDDPPRIEHLVAREDEVAVDFISRSLTLPPLYVADLIKFGAVYYALVAPQPPPHAAPEHVRIFREVTEPSVLCRRKSIKGKTVREAQKTFRVTDPNQRLEAGTYLRVHVHPKRFPRCYEIDWKSRVIAVTDNYVVLDKPAATSVGGATDNIEESCVVFTSRALGLETPLMTTHQIDNCSEGCVVLSKTKEFCSVFHGMIREKQVNKRYLALTTAPVSTGIITHYMRPINRAPRLVSEDHIKGWHVCQMEILDCKKVPWPSSLIRKVHKVDNCGWPQQEAAYECKINLLTGKTHQIRAQLAAIGTPIVGDSAYMTAAMAAIVNPSINPFGRWGQNYDSEDEKAAAVEAWISCHGKEPKSVIGLQASEISWDYEGEHHSYKAGVPWWRQDAVESDLI</sequence>